<evidence type="ECO:0000250" key="1">
    <source>
        <dbReference type="UniProtKB" id="O94874"/>
    </source>
</evidence>
<evidence type="ECO:0000256" key="2">
    <source>
        <dbReference type="SAM" id="MobiDB-lite"/>
    </source>
</evidence>
<evidence type="ECO:0000305" key="3"/>
<feature type="chain" id="PRO_0000391883" description="E3 UFM1-protein ligase 1 homolog">
    <location>
        <begin position="1"/>
        <end position="783"/>
    </location>
</feature>
<feature type="region of interest" description="Disordered" evidence="2">
    <location>
        <begin position="404"/>
        <end position="482"/>
    </location>
</feature>
<feature type="compositionally biased region" description="Basic residues" evidence="2">
    <location>
        <begin position="445"/>
        <end position="457"/>
    </location>
</feature>
<reference key="1">
    <citation type="journal article" date="2007" name="Nature">
        <title>Evolution of genes and genomes on the Drosophila phylogeny.</title>
        <authorList>
            <consortium name="Drosophila 12 genomes consortium"/>
        </authorList>
    </citation>
    <scope>NUCLEOTIDE SEQUENCE [LARGE SCALE GENOMIC DNA]</scope>
    <source>
        <strain>Tucson 15081-1352.22</strain>
    </source>
</reference>
<organism>
    <name type="scientific">Drosophila mojavensis</name>
    <name type="common">Fruit fly</name>
    <dbReference type="NCBI Taxonomy" id="7230"/>
    <lineage>
        <taxon>Eukaryota</taxon>
        <taxon>Metazoa</taxon>
        <taxon>Ecdysozoa</taxon>
        <taxon>Arthropoda</taxon>
        <taxon>Hexapoda</taxon>
        <taxon>Insecta</taxon>
        <taxon>Pterygota</taxon>
        <taxon>Neoptera</taxon>
        <taxon>Endopterygota</taxon>
        <taxon>Diptera</taxon>
        <taxon>Brachycera</taxon>
        <taxon>Muscomorpha</taxon>
        <taxon>Ephydroidea</taxon>
        <taxon>Drosophilidae</taxon>
        <taxon>Drosophila</taxon>
    </lineage>
</organism>
<comment type="function">
    <text evidence="1">E3 UFM1-protein ligase that mediates ufmylation of target proteins.</text>
</comment>
<comment type="similarity">
    <text evidence="3">Belongs to the UFL1 family.</text>
</comment>
<name>UFL1_DROMO</name>
<accession>B4KDK5</accession>
<keyword id="KW-1185">Reference proteome</keyword>
<keyword id="KW-0808">Transferase</keyword>
<keyword id="KW-0833">Ubl conjugation pathway</keyword>
<proteinExistence type="inferred from homology"/>
<sequence length="783" mass="87757">MSSDWDEIKRLAADFQKAQLTSTLQKLSERNCIEIVTLLLEKQLLDVVFTNDGKEYITPEHLEREIQDELYANGGRANLVEVSKTLNVDLSRIEALAERIAADNPQIHLMLGQLIDEDYITHIAQEINEKLSQRGEISISDLTSQFDLPSEFLQHNVMEKHLGKTIKGRQDATNPRVFFTQAYIQRCKAKIRGALAAITKPTNVSVILQQINVQEKIFHSLLDEIMPAGQVTSKQANAQYVPHIYAKTQAEWVNSFYKQNSFLEYEAINKLGISDAKAYIRKQFPNEQFLFLKRVALGAHLIELTVVSALNECSATKQYLDLATILPSNLSEEDIEEAFDAVMAQKHCNPSQFVYLQSIVFSQAYLTQLIQPCHDMAHALAKAAIDSGAYQQYIVEKTLAQKGSNSSANFDADDDGKVDKRDERRKKAASGKAGGGAQGRETKTKSTKKHQRGRAAAHNHDSDDDEETTQQSAGSSRKSVKPLELVKSSDVINRIKSTLEEEGLEHLAKPIAGLFVNQLNQAALAKAQELYEATPQTNRRQTHAAIQERVNTLLVDLRLYEKGIKLFNTDTQAQLIKYLLKSLGNDICNELTLYVAAECSLSVKMTNLNVDQRIKLIQECDAQYRNALLEQNKALNKSIEDFELATEAVLKTCSMIIKKADKKKDRALIVSHKEKLMQQLSECREPALLLHLAALILFTTITGCILHASGKFVSTILQHIRPTLNESQNALLLRYHDLVLQMLQQGTTDSPESKSLNEQLQTLQAEVVDLAQNFSRVSVSKAD</sequence>
<gene>
    <name type="ORF">GI23931</name>
</gene>
<protein>
    <recommendedName>
        <fullName>E3 UFM1-protein ligase 1 homolog</fullName>
        <ecNumber>2.3.2.-</ecNumber>
    </recommendedName>
    <alternativeName>
        <fullName evidence="3">E3 UFM1-protein transferase 1 homolog</fullName>
    </alternativeName>
</protein>
<dbReference type="EC" id="2.3.2.-"/>
<dbReference type="EMBL" id="CH933806">
    <property type="protein sequence ID" value="EDW13839.1"/>
    <property type="molecule type" value="Genomic_DNA"/>
</dbReference>
<dbReference type="SMR" id="B4KDK5"/>
<dbReference type="FunCoup" id="B4KDK5">
    <property type="interactions" value="2496"/>
</dbReference>
<dbReference type="EnsemblMetazoa" id="FBtr0174656">
    <property type="protein sequence ID" value="FBpp0173148"/>
    <property type="gene ID" value="FBgn0146656"/>
</dbReference>
<dbReference type="EnsemblMetazoa" id="XM_001998342.4">
    <property type="protein sequence ID" value="XP_001998378.1"/>
    <property type="gene ID" value="LOC6572236"/>
</dbReference>
<dbReference type="GeneID" id="6572236"/>
<dbReference type="KEGG" id="dmo:Dmoj_GI23931"/>
<dbReference type="CTD" id="23376"/>
<dbReference type="eggNOG" id="KOG2235">
    <property type="taxonomic scope" value="Eukaryota"/>
</dbReference>
<dbReference type="HOGENOM" id="CLU_012417_1_1_1"/>
<dbReference type="InParanoid" id="B4KDK5"/>
<dbReference type="OMA" id="CILHASG"/>
<dbReference type="OrthoDB" id="10258297at2759"/>
<dbReference type="PhylomeDB" id="B4KDK5"/>
<dbReference type="Proteomes" id="UP000009192">
    <property type="component" value="Unassembled WGS sequence"/>
</dbReference>
<dbReference type="GO" id="GO:0005789">
    <property type="term" value="C:endoplasmic reticulum membrane"/>
    <property type="evidence" value="ECO:0007669"/>
    <property type="project" value="TreeGrafter"/>
</dbReference>
<dbReference type="GO" id="GO:0061666">
    <property type="term" value="F:UFM1 ligase activity"/>
    <property type="evidence" value="ECO:0007669"/>
    <property type="project" value="InterPro"/>
</dbReference>
<dbReference type="GO" id="GO:1990592">
    <property type="term" value="P:protein K69-linked ufmylation"/>
    <property type="evidence" value="ECO:0007669"/>
    <property type="project" value="TreeGrafter"/>
</dbReference>
<dbReference type="GO" id="GO:0032434">
    <property type="term" value="P:regulation of proteasomal ubiquitin-dependent protein catabolic process"/>
    <property type="evidence" value="ECO:0007669"/>
    <property type="project" value="TreeGrafter"/>
</dbReference>
<dbReference type="GO" id="GO:0034976">
    <property type="term" value="P:response to endoplasmic reticulum stress"/>
    <property type="evidence" value="ECO:0007669"/>
    <property type="project" value="TreeGrafter"/>
</dbReference>
<dbReference type="InterPro" id="IPR018611">
    <property type="entry name" value="Ufl1"/>
</dbReference>
<dbReference type="InterPro" id="IPR056761">
    <property type="entry name" value="Ufl1-like_C"/>
</dbReference>
<dbReference type="InterPro" id="IPR056580">
    <property type="entry name" value="Ufl1_dom"/>
</dbReference>
<dbReference type="InterPro" id="IPR056579">
    <property type="entry name" value="Ufl1_N"/>
</dbReference>
<dbReference type="PANTHER" id="PTHR31057">
    <property type="entry name" value="E3 UFM1-PROTEIN LIGASE 1"/>
    <property type="match status" value="1"/>
</dbReference>
<dbReference type="PANTHER" id="PTHR31057:SF0">
    <property type="entry name" value="E3 UFM1-PROTEIN LIGASE 1"/>
    <property type="match status" value="1"/>
</dbReference>
<dbReference type="Pfam" id="PF09743">
    <property type="entry name" value="E3_UFM1_ligase"/>
    <property type="match status" value="1"/>
</dbReference>
<dbReference type="Pfam" id="PF23659">
    <property type="entry name" value="UFL1"/>
    <property type="match status" value="1"/>
</dbReference>
<dbReference type="Pfam" id="PF25041">
    <property type="entry name" value="UFL1_C"/>
    <property type="match status" value="1"/>
</dbReference>